<proteinExistence type="inferred from homology"/>
<sequence length="412" mass="46004">MQILKENASNQRFVTRESEVNRICCGFNGFQLGERLRRDMKTSSITTLVVNTTTYFFKDTTELIDFKEKRIDLYEYARYGNPTTMALEEKISVLEGAESTLVMASGMYASNVMLLALVPTNGHIVATKDCYKETRIFMENFLTKLGITVTFIDSDDIAGLQTLVNNHEVSLFFTESPTNPFLRCVDIKLVSKICHRRGTLVCIDATIATPINQKTLALGADLVHHSATKYIGGHNDFLAGSISGSMELVSKIRNLHKLLGGTLNPNAAYLLIRGMKTMHLRVRQQNSTGMKMAQVLEAHPKVSRVYYLGLPSHPEHLIAKRQMTGIGGLISFEIDGDLKTTIKFIDALKIPYLAASFGGCESLVDQLATGIWDIPREERLKDGFQDNLVRFSFGIEDFEDIKADVLQALETI</sequence>
<gene>
    <name evidence="3" type="primary">CGS2</name>
    <name evidence="4" type="ordered locus">At1g33320</name>
    <name evidence="5" type="ORF">F10C21.1</name>
    <name evidence="6" type="ORF">T16O9.8</name>
</gene>
<name>CGS2_ARATH</name>
<comment type="function">
    <text evidence="1">Catalyzes the first committed step of methionine (Met) biosynthesis. Catalyzes the formation of L-cystathionine from homoserine esters and L-cysteine, via a gamma-replacement reaction.</text>
</comment>
<comment type="catalytic activity">
    <reaction evidence="1">
        <text>O-phospho-L-homoserine + L-cysteine = L,L-cystathionine + phosphate</text>
        <dbReference type="Rhea" id="RHEA:80891"/>
        <dbReference type="ChEBI" id="CHEBI:35235"/>
        <dbReference type="ChEBI" id="CHEBI:43474"/>
        <dbReference type="ChEBI" id="CHEBI:57590"/>
        <dbReference type="ChEBI" id="CHEBI:58161"/>
        <dbReference type="EC" id="2.5.1.160"/>
    </reaction>
</comment>
<comment type="catalytic activity">
    <reaction evidence="1">
        <text>O-succinyl-L-homoserine + L-cysteine = L,L-cystathionine + succinate + H(+)</text>
        <dbReference type="Rhea" id="RHEA:20397"/>
        <dbReference type="ChEBI" id="CHEBI:15378"/>
        <dbReference type="ChEBI" id="CHEBI:30031"/>
        <dbReference type="ChEBI" id="CHEBI:35235"/>
        <dbReference type="ChEBI" id="CHEBI:57661"/>
        <dbReference type="ChEBI" id="CHEBI:58161"/>
    </reaction>
</comment>
<comment type="cofactor">
    <cofactor evidence="2">
        <name>pyridoxal 5'-phosphate</name>
        <dbReference type="ChEBI" id="CHEBI:597326"/>
    </cofactor>
    <text evidence="2">Binds 1 pyridoxal 5'-phosphate per subunit.</text>
</comment>
<comment type="pathway">
    <text evidence="1">Amino-acid biosynthesis; L-methionine biosynthesis via de novo pathway; L-cystathionine from O-succinyl-L-homoserine: step 1/1.</text>
</comment>
<comment type="similarity">
    <text evidence="3">Belongs to the trans-sulfuration enzymes family.</text>
</comment>
<comment type="sequence caution" evidence="3">
    <conflict type="erroneous initiation">
        <sequence resource="EMBL-CDS" id="AAG51206"/>
    </conflict>
    <text>Truncated N-terminus.</text>
</comment>
<reference key="1">
    <citation type="journal article" date="2000" name="Nature">
        <title>Sequence and analysis of chromosome 1 of the plant Arabidopsis thaliana.</title>
        <authorList>
            <person name="Theologis A."/>
            <person name="Ecker J.R."/>
            <person name="Palm C.J."/>
            <person name="Federspiel N.A."/>
            <person name="Kaul S."/>
            <person name="White O."/>
            <person name="Alonso J."/>
            <person name="Altafi H."/>
            <person name="Araujo R."/>
            <person name="Bowman C.L."/>
            <person name="Brooks S.Y."/>
            <person name="Buehler E."/>
            <person name="Chan A."/>
            <person name="Chao Q."/>
            <person name="Chen H."/>
            <person name="Cheuk R.F."/>
            <person name="Chin C.W."/>
            <person name="Chung M.K."/>
            <person name="Conn L."/>
            <person name="Conway A.B."/>
            <person name="Conway A.R."/>
            <person name="Creasy T.H."/>
            <person name="Dewar K."/>
            <person name="Dunn P."/>
            <person name="Etgu P."/>
            <person name="Feldblyum T.V."/>
            <person name="Feng J.-D."/>
            <person name="Fong B."/>
            <person name="Fujii C.Y."/>
            <person name="Gill J.E."/>
            <person name="Goldsmith A.D."/>
            <person name="Haas B."/>
            <person name="Hansen N.F."/>
            <person name="Hughes B."/>
            <person name="Huizar L."/>
            <person name="Hunter J.L."/>
            <person name="Jenkins J."/>
            <person name="Johnson-Hopson C."/>
            <person name="Khan S."/>
            <person name="Khaykin E."/>
            <person name="Kim C.J."/>
            <person name="Koo H.L."/>
            <person name="Kremenetskaia I."/>
            <person name="Kurtz D.B."/>
            <person name="Kwan A."/>
            <person name="Lam B."/>
            <person name="Langin-Hooper S."/>
            <person name="Lee A."/>
            <person name="Lee J.M."/>
            <person name="Lenz C.A."/>
            <person name="Li J.H."/>
            <person name="Li Y.-P."/>
            <person name="Lin X."/>
            <person name="Liu S.X."/>
            <person name="Liu Z.A."/>
            <person name="Luros J.S."/>
            <person name="Maiti R."/>
            <person name="Marziali A."/>
            <person name="Militscher J."/>
            <person name="Miranda M."/>
            <person name="Nguyen M."/>
            <person name="Nierman W.C."/>
            <person name="Osborne B.I."/>
            <person name="Pai G."/>
            <person name="Peterson J."/>
            <person name="Pham P.K."/>
            <person name="Rizzo M."/>
            <person name="Rooney T."/>
            <person name="Rowley D."/>
            <person name="Sakano H."/>
            <person name="Salzberg S.L."/>
            <person name="Schwartz J.R."/>
            <person name="Shinn P."/>
            <person name="Southwick A.M."/>
            <person name="Sun H."/>
            <person name="Tallon L.J."/>
            <person name="Tambunga G."/>
            <person name="Toriumi M.J."/>
            <person name="Town C.D."/>
            <person name="Utterback T."/>
            <person name="Van Aken S."/>
            <person name="Vaysberg M."/>
            <person name="Vysotskaia V.S."/>
            <person name="Walker M."/>
            <person name="Wu D."/>
            <person name="Yu G."/>
            <person name="Fraser C.M."/>
            <person name="Venter J.C."/>
            <person name="Davis R.W."/>
        </authorList>
    </citation>
    <scope>NUCLEOTIDE SEQUENCE [LARGE SCALE GENOMIC DNA]</scope>
    <source>
        <strain>cv. Columbia</strain>
    </source>
</reference>
<reference key="2">
    <citation type="journal article" date="2017" name="Plant J.">
        <title>Araport11: a complete reannotation of the Arabidopsis thaliana reference genome.</title>
        <authorList>
            <person name="Cheng C.Y."/>
            <person name="Krishnakumar V."/>
            <person name="Chan A.P."/>
            <person name="Thibaud-Nissen F."/>
            <person name="Schobel S."/>
            <person name="Town C.D."/>
        </authorList>
    </citation>
    <scope>GENOME REANNOTATION</scope>
    <source>
        <strain>cv. Columbia</strain>
    </source>
</reference>
<feature type="chain" id="PRO_0000431692" description="Probable cystathionine gamma-synthase 2">
    <location>
        <begin position="1"/>
        <end position="412"/>
    </location>
</feature>
<feature type="binding site" evidence="2">
    <location>
        <position position="76"/>
    </location>
    <ligand>
        <name>pyridoxal 5'-phosphate</name>
        <dbReference type="ChEBI" id="CHEBI:597326"/>
    </ligand>
</feature>
<feature type="binding site" evidence="2">
    <location>
        <position position="78"/>
    </location>
    <ligand>
        <name>pyridoxal 5'-phosphate</name>
        <dbReference type="ChEBI" id="CHEBI:597326"/>
    </ligand>
</feature>
<feature type="binding site" evidence="2">
    <location>
        <position position="106"/>
    </location>
    <ligand>
        <name>pyridoxal 5'-phosphate</name>
        <dbReference type="ChEBI" id="CHEBI:597326"/>
    </ligand>
</feature>
<feature type="binding site" evidence="2">
    <location>
        <position position="107"/>
    </location>
    <ligand>
        <name>pyridoxal 5'-phosphate</name>
        <dbReference type="ChEBI" id="CHEBI:597326"/>
    </ligand>
</feature>
<feature type="binding site" evidence="2">
    <location>
        <position position="131"/>
    </location>
    <ligand>
        <name>pyridoxal 5'-phosphate</name>
        <dbReference type="ChEBI" id="CHEBI:597326"/>
    </ligand>
</feature>
<feature type="binding site" evidence="2">
    <location>
        <position position="226"/>
    </location>
    <ligand>
        <name>pyridoxal 5'-phosphate</name>
        <dbReference type="ChEBI" id="CHEBI:597326"/>
    </ligand>
</feature>
<feature type="binding site" evidence="2">
    <location>
        <position position="228"/>
    </location>
    <ligand>
        <name>pyridoxal 5'-phosphate</name>
        <dbReference type="ChEBI" id="CHEBI:597326"/>
    </ligand>
</feature>
<feature type="modified residue" description="N6-(pyridoxal phosphate)lysine" evidence="2">
    <location>
        <position position="229"/>
    </location>
</feature>
<protein>
    <recommendedName>
        <fullName evidence="3">Probable cystathionine gamma-synthase 2</fullName>
        <ecNumber evidence="1">2.5.1.160</ecNumber>
    </recommendedName>
</protein>
<evidence type="ECO:0000250" key="1">
    <source>
        <dbReference type="UniProtKB" id="P55217"/>
    </source>
</evidence>
<evidence type="ECO:0000250" key="2">
    <source>
        <dbReference type="UniProtKB" id="Q9ZPL5"/>
    </source>
</evidence>
<evidence type="ECO:0000305" key="3"/>
<evidence type="ECO:0000312" key="4">
    <source>
        <dbReference type="Araport" id="AT1G33320"/>
    </source>
</evidence>
<evidence type="ECO:0000312" key="5">
    <source>
        <dbReference type="EMBL" id="AAG51206.1"/>
    </source>
</evidence>
<evidence type="ECO:0000312" key="6">
    <source>
        <dbReference type="EMBL" id="AAG51279.1"/>
    </source>
</evidence>
<keyword id="KW-0028">Amino-acid biosynthesis</keyword>
<keyword id="KW-0486">Methionine biosynthesis</keyword>
<keyword id="KW-0663">Pyridoxal phosphate</keyword>
<keyword id="KW-1185">Reference proteome</keyword>
<keyword id="KW-0808">Transferase</keyword>
<accession>Q9C876</accession>
<accession>Q9C816</accession>
<organism>
    <name type="scientific">Arabidopsis thaliana</name>
    <name type="common">Mouse-ear cress</name>
    <dbReference type="NCBI Taxonomy" id="3702"/>
    <lineage>
        <taxon>Eukaryota</taxon>
        <taxon>Viridiplantae</taxon>
        <taxon>Streptophyta</taxon>
        <taxon>Embryophyta</taxon>
        <taxon>Tracheophyta</taxon>
        <taxon>Spermatophyta</taxon>
        <taxon>Magnoliopsida</taxon>
        <taxon>eudicotyledons</taxon>
        <taxon>Gunneridae</taxon>
        <taxon>Pentapetalae</taxon>
        <taxon>rosids</taxon>
        <taxon>malvids</taxon>
        <taxon>Brassicales</taxon>
        <taxon>Brassicaceae</taxon>
        <taxon>Camelineae</taxon>
        <taxon>Arabidopsis</taxon>
    </lineage>
</organism>
<dbReference type="EC" id="2.5.1.160" evidence="1"/>
<dbReference type="EMBL" id="AC027035">
    <property type="protein sequence ID" value="AAG51279.1"/>
    <property type="molecule type" value="Genomic_DNA"/>
</dbReference>
<dbReference type="EMBL" id="AC051630">
    <property type="protein sequence ID" value="AAG51206.1"/>
    <property type="status" value="ALT_INIT"/>
    <property type="molecule type" value="Genomic_DNA"/>
</dbReference>
<dbReference type="EMBL" id="CP002684">
    <property type="protein sequence ID" value="AEE31583.1"/>
    <property type="molecule type" value="Genomic_DNA"/>
</dbReference>
<dbReference type="PIR" id="H86456">
    <property type="entry name" value="H86456"/>
</dbReference>
<dbReference type="RefSeq" id="NP_001321971.1">
    <property type="nucleotide sequence ID" value="NM_001333034.1"/>
</dbReference>
<dbReference type="RefSeq" id="NP_174600.1">
    <property type="nucleotide sequence ID" value="NM_103059.2"/>
</dbReference>
<dbReference type="SMR" id="Q9C876"/>
<dbReference type="FunCoup" id="Q9C876">
    <property type="interactions" value="328"/>
</dbReference>
<dbReference type="STRING" id="3702.Q9C876"/>
<dbReference type="PaxDb" id="3702-AT1G33320.1"/>
<dbReference type="ProMEX" id="Q9C876"/>
<dbReference type="EnsemblPlants" id="AT1G33320.1">
    <property type="protein sequence ID" value="AT1G33320.1"/>
    <property type="gene ID" value="AT1G33320"/>
</dbReference>
<dbReference type="GeneID" id="840226"/>
<dbReference type="Gramene" id="AT1G33320.1">
    <property type="protein sequence ID" value="AT1G33320.1"/>
    <property type="gene ID" value="AT1G33320"/>
</dbReference>
<dbReference type="KEGG" id="ath:AT1G33320"/>
<dbReference type="Araport" id="AT1G33320"/>
<dbReference type="TAIR" id="AT1G33320"/>
<dbReference type="eggNOG" id="KOG0053">
    <property type="taxonomic scope" value="Eukaryota"/>
</dbReference>
<dbReference type="HOGENOM" id="CLU_018986_1_0_1"/>
<dbReference type="InParanoid" id="Q9C876"/>
<dbReference type="PhylomeDB" id="Q9C876"/>
<dbReference type="BioCyc" id="ARA:AT1G33320-MONOMER"/>
<dbReference type="UniPathway" id="UPA00051">
    <property type="reaction ID" value="UER00077"/>
</dbReference>
<dbReference type="PRO" id="PR:Q9C876"/>
<dbReference type="Proteomes" id="UP000006548">
    <property type="component" value="Chromosome 1"/>
</dbReference>
<dbReference type="ExpressionAtlas" id="Q9C876">
    <property type="expression patterns" value="baseline and differential"/>
</dbReference>
<dbReference type="GO" id="GO:0003962">
    <property type="term" value="F:cystathionine gamma-synthase activity"/>
    <property type="evidence" value="ECO:0007669"/>
    <property type="project" value="UniProtKB-EC"/>
</dbReference>
<dbReference type="GO" id="GO:0030170">
    <property type="term" value="F:pyridoxal phosphate binding"/>
    <property type="evidence" value="ECO:0007669"/>
    <property type="project" value="InterPro"/>
</dbReference>
<dbReference type="GO" id="GO:0009086">
    <property type="term" value="P:methionine biosynthetic process"/>
    <property type="evidence" value="ECO:0007669"/>
    <property type="project" value="UniProtKB-KW"/>
</dbReference>
<dbReference type="GO" id="GO:0019346">
    <property type="term" value="P:transsulfuration"/>
    <property type="evidence" value="ECO:0007669"/>
    <property type="project" value="InterPro"/>
</dbReference>
<dbReference type="CDD" id="cd00614">
    <property type="entry name" value="CGS_like"/>
    <property type="match status" value="1"/>
</dbReference>
<dbReference type="FunFam" id="3.40.640.10:FF:000046">
    <property type="entry name" value="Cystathionine gamma-lyase"/>
    <property type="match status" value="1"/>
</dbReference>
<dbReference type="FunFam" id="3.90.1150.10:FF:000033">
    <property type="entry name" value="Cystathionine gamma-synthase"/>
    <property type="match status" value="1"/>
</dbReference>
<dbReference type="Gene3D" id="3.90.1150.10">
    <property type="entry name" value="Aspartate Aminotransferase, domain 1"/>
    <property type="match status" value="1"/>
</dbReference>
<dbReference type="Gene3D" id="3.40.640.10">
    <property type="entry name" value="Type I PLP-dependent aspartate aminotransferase-like (Major domain)"/>
    <property type="match status" value="1"/>
</dbReference>
<dbReference type="InterPro" id="IPR044639">
    <property type="entry name" value="CGS1/2"/>
</dbReference>
<dbReference type="InterPro" id="IPR000277">
    <property type="entry name" value="Cys/Met-Metab_PyrdxlP-dep_enz"/>
</dbReference>
<dbReference type="InterPro" id="IPR054542">
    <property type="entry name" value="Cys_met_metab_PP"/>
</dbReference>
<dbReference type="InterPro" id="IPR015424">
    <property type="entry name" value="PyrdxlP-dep_Trfase"/>
</dbReference>
<dbReference type="InterPro" id="IPR015421">
    <property type="entry name" value="PyrdxlP-dep_Trfase_major"/>
</dbReference>
<dbReference type="InterPro" id="IPR015422">
    <property type="entry name" value="PyrdxlP-dep_Trfase_small"/>
</dbReference>
<dbReference type="PANTHER" id="PTHR43379">
    <property type="entry name" value="CYSTATHIONINE GAMMA-SYNTHASE"/>
    <property type="match status" value="1"/>
</dbReference>
<dbReference type="PANTHER" id="PTHR43379:SF1">
    <property type="entry name" value="CYSTATHIONINE GAMMA-SYNTHASE 1, CHLOROPLASTIC-RELATED"/>
    <property type="match status" value="1"/>
</dbReference>
<dbReference type="Pfam" id="PF01053">
    <property type="entry name" value="Cys_Met_Meta_PP"/>
    <property type="match status" value="1"/>
</dbReference>
<dbReference type="PIRSF" id="PIRSF001434">
    <property type="entry name" value="CGS"/>
    <property type="match status" value="1"/>
</dbReference>
<dbReference type="SUPFAM" id="SSF53383">
    <property type="entry name" value="PLP-dependent transferases"/>
    <property type="match status" value="1"/>
</dbReference>
<dbReference type="PROSITE" id="PS00868">
    <property type="entry name" value="CYS_MET_METAB_PP"/>
    <property type="match status" value="1"/>
</dbReference>